<organism>
    <name type="scientific">Salmonella heidelberg (strain SL476)</name>
    <dbReference type="NCBI Taxonomy" id="454169"/>
    <lineage>
        <taxon>Bacteria</taxon>
        <taxon>Pseudomonadati</taxon>
        <taxon>Pseudomonadota</taxon>
        <taxon>Gammaproteobacteria</taxon>
        <taxon>Enterobacterales</taxon>
        <taxon>Enterobacteriaceae</taxon>
        <taxon>Salmonella</taxon>
    </lineage>
</organism>
<sequence length="428" mass="45449">MKTSLFKSLYFQVLTAIAIGILLGHYYPELGAQMKPLGDAFVKLIKMIIAPVIFCTVVTGIAGMESMKAVGRTGAVALLYFEIVSTIALIIGLIIVNVVQPGAGMNVDPATLDAQAVAVYAAQAKEQGIIAFLMDVIPGSVIGAFASGNILQVLLFAVLFGFALHRLGSKGQLIFNVIESFSQVIFGIINMIMRLAPIGAFGAMAFTIGKYGVGSLVQLGQLIICFYITCILFVVVVLGTIARVTGFSIFKFIRYIREELLIVLGTSSSESALPRMLDKMEKLGCRKSVVGLVIPTGYSFNLDGTSIYLTMAAVFIAQATNSHMDIFHQITLLVVLLLSSKGAAGVTGSGFIVLAATISAVGHLPVAGLALILGIDRFMSEARALTNLVGNGVATVVVAKWVKELDHQKLDDVLNNRAPDGKTHEISS</sequence>
<feature type="chain" id="PRO_1000140467" description="C4-dicarboxylate transport protein">
    <location>
        <begin position="1"/>
        <end position="428"/>
    </location>
</feature>
<feature type="transmembrane region" description="Helical" evidence="1">
    <location>
        <begin position="4"/>
        <end position="24"/>
    </location>
</feature>
<feature type="transmembrane region" description="Helical" evidence="1">
    <location>
        <begin position="44"/>
        <end position="64"/>
    </location>
</feature>
<feature type="transmembrane region" description="Helical" evidence="1">
    <location>
        <begin position="76"/>
        <end position="96"/>
    </location>
</feature>
<feature type="transmembrane region" description="Helical" evidence="1">
    <location>
        <begin position="142"/>
        <end position="162"/>
    </location>
</feature>
<feature type="transmembrane region" description="Helical" evidence="1">
    <location>
        <begin position="184"/>
        <end position="204"/>
    </location>
</feature>
<feature type="transmembrane region" description="Helical" evidence="1">
    <location>
        <begin position="222"/>
        <end position="242"/>
    </location>
</feature>
<feature type="transmembrane region" description="Helical" evidence="1">
    <location>
        <begin position="289"/>
        <end position="309"/>
    </location>
</feature>
<feature type="transmembrane region" description="Helical" evidence="1">
    <location>
        <begin position="326"/>
        <end position="346"/>
    </location>
</feature>
<feature type="transmembrane region" description="Helical" evidence="1">
    <location>
        <begin position="352"/>
        <end position="372"/>
    </location>
</feature>
<accession>B4T8F0</accession>
<evidence type="ECO:0000255" key="1">
    <source>
        <dbReference type="HAMAP-Rule" id="MF_01300"/>
    </source>
</evidence>
<dbReference type="EMBL" id="CP001120">
    <property type="protein sequence ID" value="ACF67140.1"/>
    <property type="molecule type" value="Genomic_DNA"/>
</dbReference>
<dbReference type="RefSeq" id="WP_000858228.1">
    <property type="nucleotide sequence ID" value="NC_011083.1"/>
</dbReference>
<dbReference type="SMR" id="B4T8F0"/>
<dbReference type="KEGG" id="seh:SeHA_C3930"/>
<dbReference type="HOGENOM" id="CLU_019375_7_0_6"/>
<dbReference type="Proteomes" id="UP000001866">
    <property type="component" value="Chromosome"/>
</dbReference>
<dbReference type="GO" id="GO:0005886">
    <property type="term" value="C:plasma membrane"/>
    <property type="evidence" value="ECO:0007669"/>
    <property type="project" value="UniProtKB-SubCell"/>
</dbReference>
<dbReference type="GO" id="GO:0015138">
    <property type="term" value="F:fumarate transmembrane transporter activity"/>
    <property type="evidence" value="ECO:0007669"/>
    <property type="project" value="TreeGrafter"/>
</dbReference>
<dbReference type="GO" id="GO:0015366">
    <property type="term" value="F:malate:proton symporter activity"/>
    <property type="evidence" value="ECO:0007669"/>
    <property type="project" value="TreeGrafter"/>
</dbReference>
<dbReference type="GO" id="GO:0015141">
    <property type="term" value="F:succinate transmembrane transporter activity"/>
    <property type="evidence" value="ECO:0007669"/>
    <property type="project" value="TreeGrafter"/>
</dbReference>
<dbReference type="GO" id="GO:0070778">
    <property type="term" value="P:L-aspartate transmembrane transport"/>
    <property type="evidence" value="ECO:0007669"/>
    <property type="project" value="TreeGrafter"/>
</dbReference>
<dbReference type="FunFam" id="1.10.3860.10:FF:000001">
    <property type="entry name" value="C4-dicarboxylate transport protein"/>
    <property type="match status" value="1"/>
</dbReference>
<dbReference type="Gene3D" id="1.10.3860.10">
    <property type="entry name" value="Sodium:dicarboxylate symporter"/>
    <property type="match status" value="1"/>
</dbReference>
<dbReference type="HAMAP" id="MF_01300">
    <property type="entry name" value="C4_dicarb_transport"/>
    <property type="match status" value="1"/>
</dbReference>
<dbReference type="InterPro" id="IPR023954">
    <property type="entry name" value="C4_dicarb_transport"/>
</dbReference>
<dbReference type="InterPro" id="IPR001991">
    <property type="entry name" value="Na-dicarboxylate_symporter"/>
</dbReference>
<dbReference type="InterPro" id="IPR018107">
    <property type="entry name" value="Na-dicarboxylate_symporter_CS"/>
</dbReference>
<dbReference type="InterPro" id="IPR036458">
    <property type="entry name" value="Na:dicarbo_symporter_sf"/>
</dbReference>
<dbReference type="NCBIfam" id="NF002461">
    <property type="entry name" value="PRK01663.1"/>
    <property type="match status" value="1"/>
</dbReference>
<dbReference type="NCBIfam" id="NF009587">
    <property type="entry name" value="PRK13027.1"/>
    <property type="match status" value="1"/>
</dbReference>
<dbReference type="PANTHER" id="PTHR42865:SF1">
    <property type="entry name" value="AEROBIC C4-DICARBOXYLATE TRANSPORT PROTEIN"/>
    <property type="match status" value="1"/>
</dbReference>
<dbReference type="PANTHER" id="PTHR42865">
    <property type="entry name" value="PROTON/GLUTAMATE-ASPARTATE SYMPORTER"/>
    <property type="match status" value="1"/>
</dbReference>
<dbReference type="Pfam" id="PF00375">
    <property type="entry name" value="SDF"/>
    <property type="match status" value="1"/>
</dbReference>
<dbReference type="PRINTS" id="PR00173">
    <property type="entry name" value="EDTRNSPORT"/>
</dbReference>
<dbReference type="SUPFAM" id="SSF118215">
    <property type="entry name" value="Proton glutamate symport protein"/>
    <property type="match status" value="1"/>
</dbReference>
<dbReference type="PROSITE" id="PS00713">
    <property type="entry name" value="NA_DICARBOXYL_SYMP_1"/>
    <property type="match status" value="1"/>
</dbReference>
<dbReference type="PROSITE" id="PS00714">
    <property type="entry name" value="NA_DICARBOXYL_SYMP_2"/>
    <property type="match status" value="1"/>
</dbReference>
<protein>
    <recommendedName>
        <fullName evidence="1">C4-dicarboxylate transport protein</fullName>
    </recommendedName>
</protein>
<gene>
    <name evidence="1" type="primary">dctA</name>
    <name type="ordered locus">SeHA_C3930</name>
</gene>
<comment type="function">
    <text evidence="1">Responsible for the transport of dicarboxylates such as succinate, fumarate, and malate from the periplasm across the membrane.</text>
</comment>
<comment type="subcellular location">
    <subcellularLocation>
        <location evidence="1">Cell inner membrane</location>
        <topology evidence="1">Multi-pass membrane protein</topology>
    </subcellularLocation>
</comment>
<comment type="similarity">
    <text evidence="1">Belongs to the dicarboxylate/amino acid:cation symporter (DAACS) (TC 2.A.23) family.</text>
</comment>
<proteinExistence type="inferred from homology"/>
<name>DCTA_SALHS</name>
<keyword id="KW-0997">Cell inner membrane</keyword>
<keyword id="KW-1003">Cell membrane</keyword>
<keyword id="KW-0472">Membrane</keyword>
<keyword id="KW-0769">Symport</keyword>
<keyword id="KW-0812">Transmembrane</keyword>
<keyword id="KW-1133">Transmembrane helix</keyword>
<keyword id="KW-0813">Transport</keyword>
<reference key="1">
    <citation type="journal article" date="2011" name="J. Bacteriol.">
        <title>Comparative genomics of 28 Salmonella enterica isolates: evidence for CRISPR-mediated adaptive sublineage evolution.</title>
        <authorList>
            <person name="Fricke W.F."/>
            <person name="Mammel M.K."/>
            <person name="McDermott P.F."/>
            <person name="Tartera C."/>
            <person name="White D.G."/>
            <person name="Leclerc J.E."/>
            <person name="Ravel J."/>
            <person name="Cebula T.A."/>
        </authorList>
    </citation>
    <scope>NUCLEOTIDE SEQUENCE [LARGE SCALE GENOMIC DNA]</scope>
    <source>
        <strain>SL476</strain>
    </source>
</reference>